<proteinExistence type="inferred from homology"/>
<reference key="1">
    <citation type="journal article" date="2009" name="PLoS ONE">
        <title>Non mycobacterial virulence genes in the genome of the emerging pathogen Mycobacterium abscessus.</title>
        <authorList>
            <person name="Ripoll F."/>
            <person name="Pasek S."/>
            <person name="Schenowitz C."/>
            <person name="Dossat C."/>
            <person name="Barbe V."/>
            <person name="Rottman M."/>
            <person name="Macheras E."/>
            <person name="Heym B."/>
            <person name="Herrmann J.L."/>
            <person name="Daffe M."/>
            <person name="Brosch R."/>
            <person name="Risler J.L."/>
            <person name="Gaillard J.L."/>
        </authorList>
    </citation>
    <scope>NUCLEOTIDE SEQUENCE [LARGE SCALE GENOMIC DNA]</scope>
    <source>
        <strain>ATCC 19977 / DSM 44196 / CCUG 20993 / CIP 104536 / JCM 13569 / NCTC 13031 / TMC 1543 / L948</strain>
    </source>
</reference>
<dbReference type="EC" id="7.1.1.-" evidence="1"/>
<dbReference type="EMBL" id="CU458896">
    <property type="protein sequence ID" value="CAM62216.1"/>
    <property type="molecule type" value="Genomic_DNA"/>
</dbReference>
<dbReference type="RefSeq" id="WP_005061196.1">
    <property type="nucleotide sequence ID" value="NZ_MLCG01000002.1"/>
</dbReference>
<dbReference type="SMR" id="B1MPG5"/>
<dbReference type="GeneID" id="93379071"/>
<dbReference type="KEGG" id="mab:MAB_2135"/>
<dbReference type="Proteomes" id="UP000007137">
    <property type="component" value="Chromosome"/>
</dbReference>
<dbReference type="GO" id="GO:0005886">
    <property type="term" value="C:plasma membrane"/>
    <property type="evidence" value="ECO:0007669"/>
    <property type="project" value="UniProtKB-SubCell"/>
</dbReference>
<dbReference type="GO" id="GO:0045271">
    <property type="term" value="C:respiratory chain complex I"/>
    <property type="evidence" value="ECO:0007669"/>
    <property type="project" value="TreeGrafter"/>
</dbReference>
<dbReference type="GO" id="GO:0051539">
    <property type="term" value="F:4 iron, 4 sulfur cluster binding"/>
    <property type="evidence" value="ECO:0007669"/>
    <property type="project" value="UniProtKB-KW"/>
</dbReference>
<dbReference type="GO" id="GO:0005506">
    <property type="term" value="F:iron ion binding"/>
    <property type="evidence" value="ECO:0007669"/>
    <property type="project" value="UniProtKB-UniRule"/>
</dbReference>
<dbReference type="GO" id="GO:0008137">
    <property type="term" value="F:NADH dehydrogenase (ubiquinone) activity"/>
    <property type="evidence" value="ECO:0007669"/>
    <property type="project" value="InterPro"/>
</dbReference>
<dbReference type="GO" id="GO:0050136">
    <property type="term" value="F:NADH:ubiquinone reductase (non-electrogenic) activity"/>
    <property type="evidence" value="ECO:0007669"/>
    <property type="project" value="UniProtKB-UniRule"/>
</dbReference>
<dbReference type="GO" id="GO:0048038">
    <property type="term" value="F:quinone binding"/>
    <property type="evidence" value="ECO:0007669"/>
    <property type="project" value="UniProtKB-KW"/>
</dbReference>
<dbReference type="GO" id="GO:0009060">
    <property type="term" value="P:aerobic respiration"/>
    <property type="evidence" value="ECO:0007669"/>
    <property type="project" value="TreeGrafter"/>
</dbReference>
<dbReference type="GO" id="GO:0015990">
    <property type="term" value="P:electron transport coupled proton transport"/>
    <property type="evidence" value="ECO:0007669"/>
    <property type="project" value="TreeGrafter"/>
</dbReference>
<dbReference type="FunFam" id="3.40.50.12280:FF:000004">
    <property type="entry name" value="NADH-quinone oxidoreductase subunit B"/>
    <property type="match status" value="1"/>
</dbReference>
<dbReference type="Gene3D" id="3.40.50.12280">
    <property type="match status" value="1"/>
</dbReference>
<dbReference type="HAMAP" id="MF_01356">
    <property type="entry name" value="NDH1_NuoB"/>
    <property type="match status" value="1"/>
</dbReference>
<dbReference type="InterPro" id="IPR006137">
    <property type="entry name" value="NADH_UbQ_OxRdtase-like_20kDa"/>
</dbReference>
<dbReference type="InterPro" id="IPR006138">
    <property type="entry name" value="NADH_UQ_OxRdtase_20Kd_su"/>
</dbReference>
<dbReference type="NCBIfam" id="TIGR01957">
    <property type="entry name" value="nuoB_fam"/>
    <property type="match status" value="1"/>
</dbReference>
<dbReference type="NCBIfam" id="NF005012">
    <property type="entry name" value="PRK06411.1"/>
    <property type="match status" value="1"/>
</dbReference>
<dbReference type="PANTHER" id="PTHR11995">
    <property type="entry name" value="NADH DEHYDROGENASE"/>
    <property type="match status" value="1"/>
</dbReference>
<dbReference type="PANTHER" id="PTHR11995:SF14">
    <property type="entry name" value="NADH DEHYDROGENASE [UBIQUINONE] IRON-SULFUR PROTEIN 7, MITOCHONDRIAL"/>
    <property type="match status" value="1"/>
</dbReference>
<dbReference type="Pfam" id="PF01058">
    <property type="entry name" value="Oxidored_q6"/>
    <property type="match status" value="1"/>
</dbReference>
<dbReference type="SUPFAM" id="SSF56770">
    <property type="entry name" value="HydA/Nqo6-like"/>
    <property type="match status" value="1"/>
</dbReference>
<dbReference type="PROSITE" id="PS01150">
    <property type="entry name" value="COMPLEX1_20K"/>
    <property type="match status" value="1"/>
</dbReference>
<keyword id="KW-0004">4Fe-4S</keyword>
<keyword id="KW-1003">Cell membrane</keyword>
<keyword id="KW-0408">Iron</keyword>
<keyword id="KW-0411">Iron-sulfur</keyword>
<keyword id="KW-0472">Membrane</keyword>
<keyword id="KW-0479">Metal-binding</keyword>
<keyword id="KW-0520">NAD</keyword>
<keyword id="KW-0874">Quinone</keyword>
<keyword id="KW-1185">Reference proteome</keyword>
<keyword id="KW-1278">Translocase</keyword>
<keyword id="KW-0813">Transport</keyword>
<protein>
    <recommendedName>
        <fullName evidence="1">NADH-quinone oxidoreductase subunit B</fullName>
        <ecNumber evidence="1">7.1.1.-</ecNumber>
    </recommendedName>
    <alternativeName>
        <fullName evidence="1">NADH dehydrogenase I subunit B</fullName>
    </alternativeName>
    <alternativeName>
        <fullName evidence="1">NDH-1 subunit B</fullName>
    </alternativeName>
</protein>
<feature type="chain" id="PRO_0000376275" description="NADH-quinone oxidoreductase subunit B">
    <location>
        <begin position="1"/>
        <end position="184"/>
    </location>
</feature>
<feature type="binding site" evidence="1">
    <location>
        <position position="37"/>
    </location>
    <ligand>
        <name>[4Fe-4S] cluster</name>
        <dbReference type="ChEBI" id="CHEBI:49883"/>
    </ligand>
</feature>
<feature type="binding site" evidence="1">
    <location>
        <position position="38"/>
    </location>
    <ligand>
        <name>[4Fe-4S] cluster</name>
        <dbReference type="ChEBI" id="CHEBI:49883"/>
    </ligand>
</feature>
<feature type="binding site" evidence="1">
    <location>
        <position position="103"/>
    </location>
    <ligand>
        <name>[4Fe-4S] cluster</name>
        <dbReference type="ChEBI" id="CHEBI:49883"/>
    </ligand>
</feature>
<feature type="binding site" evidence="1">
    <location>
        <position position="132"/>
    </location>
    <ligand>
        <name>[4Fe-4S] cluster</name>
        <dbReference type="ChEBI" id="CHEBI:49883"/>
    </ligand>
</feature>
<sequence>MGLEEKLPSGFLLSTVETLAGYVRKGSLWPATFGLACCAIEMMSTAGPRFDIARFGMERFSATPRQADLMIVAGRVSQKMAPVLRQIYDQMAEPKWVLAMGVCASSGGMFNNYAIVQGVDHVVPVDIYLPGCPPRPEMLLHAILKLHEKIAHMPLGANREEVIRETEAAALAATPTIEMKGLLR</sequence>
<accession>B1MPG5</accession>
<name>NUOB_MYCA9</name>
<gene>
    <name evidence="1" type="primary">nuoB</name>
    <name type="ordered locus">MAB_2135</name>
</gene>
<evidence type="ECO:0000255" key="1">
    <source>
        <dbReference type="HAMAP-Rule" id="MF_01356"/>
    </source>
</evidence>
<organism>
    <name type="scientific">Mycobacteroides abscessus (strain ATCC 19977 / DSM 44196 / CCUG 20993 / CIP 104536 / JCM 13569 / NCTC 13031 / TMC 1543 / L948)</name>
    <name type="common">Mycobacterium abscessus</name>
    <dbReference type="NCBI Taxonomy" id="561007"/>
    <lineage>
        <taxon>Bacteria</taxon>
        <taxon>Bacillati</taxon>
        <taxon>Actinomycetota</taxon>
        <taxon>Actinomycetes</taxon>
        <taxon>Mycobacteriales</taxon>
        <taxon>Mycobacteriaceae</taxon>
        <taxon>Mycobacteroides</taxon>
        <taxon>Mycobacteroides abscessus</taxon>
    </lineage>
</organism>
<comment type="function">
    <text evidence="1">NDH-1 shuttles electrons from NADH, via FMN and iron-sulfur (Fe-S) centers, to quinones in the respiratory chain. The immediate electron acceptor for the enzyme in this species is believed to be a menaquinone. Couples the redox reaction to proton translocation (for every two electrons transferred, four hydrogen ions are translocated across the cytoplasmic membrane), and thus conserves the redox energy in a proton gradient.</text>
</comment>
<comment type="catalytic activity">
    <reaction evidence="1">
        <text>a quinone + NADH + 5 H(+)(in) = a quinol + NAD(+) + 4 H(+)(out)</text>
        <dbReference type="Rhea" id="RHEA:57888"/>
        <dbReference type="ChEBI" id="CHEBI:15378"/>
        <dbReference type="ChEBI" id="CHEBI:24646"/>
        <dbReference type="ChEBI" id="CHEBI:57540"/>
        <dbReference type="ChEBI" id="CHEBI:57945"/>
        <dbReference type="ChEBI" id="CHEBI:132124"/>
    </reaction>
</comment>
<comment type="cofactor">
    <cofactor evidence="1">
        <name>[4Fe-4S] cluster</name>
        <dbReference type="ChEBI" id="CHEBI:49883"/>
    </cofactor>
    <text evidence="1">Binds 1 [4Fe-4S] cluster.</text>
</comment>
<comment type="subunit">
    <text evidence="1">NDH-1 is composed of 14 different subunits. Subunits NuoB, C, D, E, F, and G constitute the peripheral sector of the complex.</text>
</comment>
<comment type="subcellular location">
    <subcellularLocation>
        <location evidence="1">Cell membrane</location>
        <topology evidence="1">Peripheral membrane protein</topology>
        <orientation evidence="1">Cytoplasmic side</orientation>
    </subcellularLocation>
</comment>
<comment type="similarity">
    <text evidence="1">Belongs to the complex I 20 kDa subunit family.</text>
</comment>